<comment type="function">
    <text evidence="1">Catalyzes the conversion of 3-deoxy-D-arabino-heptulosonate 7-phosphate (DAHP) to dehydroquinate (DHQ).</text>
</comment>
<comment type="catalytic activity">
    <reaction evidence="1">
        <text>7-phospho-2-dehydro-3-deoxy-D-arabino-heptonate = 3-dehydroquinate + phosphate</text>
        <dbReference type="Rhea" id="RHEA:21968"/>
        <dbReference type="ChEBI" id="CHEBI:32364"/>
        <dbReference type="ChEBI" id="CHEBI:43474"/>
        <dbReference type="ChEBI" id="CHEBI:58394"/>
        <dbReference type="EC" id="4.2.3.4"/>
    </reaction>
</comment>
<comment type="cofactor">
    <cofactor evidence="1">
        <name>Co(2+)</name>
        <dbReference type="ChEBI" id="CHEBI:48828"/>
    </cofactor>
    <cofactor evidence="1">
        <name>Zn(2+)</name>
        <dbReference type="ChEBI" id="CHEBI:29105"/>
    </cofactor>
    <text evidence="1">Binds 1 divalent metal cation per subunit. Can use either Co(2+) or Zn(2+).</text>
</comment>
<comment type="cofactor">
    <cofactor evidence="1">
        <name>NAD(+)</name>
        <dbReference type="ChEBI" id="CHEBI:57540"/>
    </cofactor>
</comment>
<comment type="pathway">
    <text evidence="1">Metabolic intermediate biosynthesis; chorismate biosynthesis; chorismate from D-erythrose 4-phosphate and phosphoenolpyruvate: step 2/7.</text>
</comment>
<comment type="subcellular location">
    <subcellularLocation>
        <location evidence="1">Cytoplasm</location>
    </subcellularLocation>
</comment>
<comment type="similarity">
    <text evidence="1">Belongs to the sugar phosphate cyclases superfamily. Dehydroquinate synthase family.</text>
</comment>
<reference key="1">
    <citation type="journal article" date="2009" name="BMC Genomics">
        <title>Pseudogene accumulation in the evolutionary histories of Salmonella enterica serovars Paratyphi A and Typhi.</title>
        <authorList>
            <person name="Holt K.E."/>
            <person name="Thomson N.R."/>
            <person name="Wain J."/>
            <person name="Langridge G.C."/>
            <person name="Hasan R."/>
            <person name="Bhutta Z.A."/>
            <person name="Quail M.A."/>
            <person name="Norbertczak H."/>
            <person name="Walker D."/>
            <person name="Simmonds M."/>
            <person name="White B."/>
            <person name="Bason N."/>
            <person name="Mungall K."/>
            <person name="Dougan G."/>
            <person name="Parkhill J."/>
        </authorList>
    </citation>
    <scope>NUCLEOTIDE SEQUENCE [LARGE SCALE GENOMIC DNA]</scope>
    <source>
        <strain>AKU_12601</strain>
    </source>
</reference>
<organism>
    <name type="scientific">Salmonella paratyphi A (strain AKU_12601)</name>
    <dbReference type="NCBI Taxonomy" id="554290"/>
    <lineage>
        <taxon>Bacteria</taxon>
        <taxon>Pseudomonadati</taxon>
        <taxon>Pseudomonadota</taxon>
        <taxon>Gammaproteobacteria</taxon>
        <taxon>Enterobacterales</taxon>
        <taxon>Enterobacteriaceae</taxon>
        <taxon>Salmonella</taxon>
    </lineage>
</organism>
<dbReference type="EC" id="4.2.3.4" evidence="1"/>
<dbReference type="EMBL" id="FM200053">
    <property type="protein sequence ID" value="CAR61381.1"/>
    <property type="molecule type" value="Genomic_DNA"/>
</dbReference>
<dbReference type="RefSeq" id="WP_000439824.1">
    <property type="nucleotide sequence ID" value="NC_011147.1"/>
</dbReference>
<dbReference type="SMR" id="B5BH29"/>
<dbReference type="KEGG" id="sek:SSPA3127"/>
<dbReference type="HOGENOM" id="CLU_001201_0_2_6"/>
<dbReference type="UniPathway" id="UPA00053">
    <property type="reaction ID" value="UER00085"/>
</dbReference>
<dbReference type="Proteomes" id="UP000001869">
    <property type="component" value="Chromosome"/>
</dbReference>
<dbReference type="GO" id="GO:0005737">
    <property type="term" value="C:cytoplasm"/>
    <property type="evidence" value="ECO:0007669"/>
    <property type="project" value="UniProtKB-SubCell"/>
</dbReference>
<dbReference type="GO" id="GO:0003856">
    <property type="term" value="F:3-dehydroquinate synthase activity"/>
    <property type="evidence" value="ECO:0007669"/>
    <property type="project" value="UniProtKB-UniRule"/>
</dbReference>
<dbReference type="GO" id="GO:0046872">
    <property type="term" value="F:metal ion binding"/>
    <property type="evidence" value="ECO:0007669"/>
    <property type="project" value="UniProtKB-KW"/>
</dbReference>
<dbReference type="GO" id="GO:0000166">
    <property type="term" value="F:nucleotide binding"/>
    <property type="evidence" value="ECO:0007669"/>
    <property type="project" value="UniProtKB-KW"/>
</dbReference>
<dbReference type="GO" id="GO:0008652">
    <property type="term" value="P:amino acid biosynthetic process"/>
    <property type="evidence" value="ECO:0007669"/>
    <property type="project" value="UniProtKB-KW"/>
</dbReference>
<dbReference type="GO" id="GO:0009073">
    <property type="term" value="P:aromatic amino acid family biosynthetic process"/>
    <property type="evidence" value="ECO:0007669"/>
    <property type="project" value="UniProtKB-KW"/>
</dbReference>
<dbReference type="GO" id="GO:0009423">
    <property type="term" value="P:chorismate biosynthetic process"/>
    <property type="evidence" value="ECO:0007669"/>
    <property type="project" value="UniProtKB-UniRule"/>
</dbReference>
<dbReference type="CDD" id="cd08195">
    <property type="entry name" value="DHQS"/>
    <property type="match status" value="1"/>
</dbReference>
<dbReference type="FunFam" id="1.20.1090.10:FF:000002">
    <property type="entry name" value="3-dehydroquinate synthase"/>
    <property type="match status" value="1"/>
</dbReference>
<dbReference type="FunFam" id="3.40.50.1970:FF:000001">
    <property type="entry name" value="3-dehydroquinate synthase"/>
    <property type="match status" value="1"/>
</dbReference>
<dbReference type="Gene3D" id="3.40.50.1970">
    <property type="match status" value="1"/>
</dbReference>
<dbReference type="Gene3D" id="1.20.1090.10">
    <property type="entry name" value="Dehydroquinate synthase-like - alpha domain"/>
    <property type="match status" value="1"/>
</dbReference>
<dbReference type="HAMAP" id="MF_00110">
    <property type="entry name" value="DHQ_synthase"/>
    <property type="match status" value="1"/>
</dbReference>
<dbReference type="InterPro" id="IPR050071">
    <property type="entry name" value="Dehydroquinate_synthase"/>
</dbReference>
<dbReference type="InterPro" id="IPR016037">
    <property type="entry name" value="DHQ_synth_AroB"/>
</dbReference>
<dbReference type="InterPro" id="IPR030963">
    <property type="entry name" value="DHQ_synth_fam"/>
</dbReference>
<dbReference type="InterPro" id="IPR030960">
    <property type="entry name" value="DHQS/DOIS_N"/>
</dbReference>
<dbReference type="InterPro" id="IPR056179">
    <property type="entry name" value="DHQS_C"/>
</dbReference>
<dbReference type="NCBIfam" id="TIGR01357">
    <property type="entry name" value="aroB"/>
    <property type="match status" value="1"/>
</dbReference>
<dbReference type="PANTHER" id="PTHR43622">
    <property type="entry name" value="3-DEHYDROQUINATE SYNTHASE"/>
    <property type="match status" value="1"/>
</dbReference>
<dbReference type="PANTHER" id="PTHR43622:SF7">
    <property type="entry name" value="3-DEHYDROQUINATE SYNTHASE, CHLOROPLASTIC"/>
    <property type="match status" value="1"/>
</dbReference>
<dbReference type="Pfam" id="PF01761">
    <property type="entry name" value="DHQ_synthase"/>
    <property type="match status" value="1"/>
</dbReference>
<dbReference type="Pfam" id="PF24621">
    <property type="entry name" value="DHQS_C"/>
    <property type="match status" value="1"/>
</dbReference>
<dbReference type="PIRSF" id="PIRSF001455">
    <property type="entry name" value="DHQ_synth"/>
    <property type="match status" value="1"/>
</dbReference>
<dbReference type="SUPFAM" id="SSF56796">
    <property type="entry name" value="Dehydroquinate synthase-like"/>
    <property type="match status" value="1"/>
</dbReference>
<feature type="chain" id="PRO_1000094602" description="3-dehydroquinate synthase">
    <location>
        <begin position="1"/>
        <end position="362"/>
    </location>
</feature>
<feature type="binding site" evidence="1">
    <location>
        <begin position="71"/>
        <end position="76"/>
    </location>
    <ligand>
        <name>NAD(+)</name>
        <dbReference type="ChEBI" id="CHEBI:57540"/>
    </ligand>
</feature>
<feature type="binding site" evidence="1">
    <location>
        <begin position="105"/>
        <end position="109"/>
    </location>
    <ligand>
        <name>NAD(+)</name>
        <dbReference type="ChEBI" id="CHEBI:57540"/>
    </ligand>
</feature>
<feature type="binding site" evidence="1">
    <location>
        <begin position="129"/>
        <end position="130"/>
    </location>
    <ligand>
        <name>NAD(+)</name>
        <dbReference type="ChEBI" id="CHEBI:57540"/>
    </ligand>
</feature>
<feature type="binding site" evidence="1">
    <location>
        <position position="142"/>
    </location>
    <ligand>
        <name>NAD(+)</name>
        <dbReference type="ChEBI" id="CHEBI:57540"/>
    </ligand>
</feature>
<feature type="binding site" evidence="1">
    <location>
        <position position="151"/>
    </location>
    <ligand>
        <name>NAD(+)</name>
        <dbReference type="ChEBI" id="CHEBI:57540"/>
    </ligand>
</feature>
<feature type="binding site" evidence="1">
    <location>
        <begin position="169"/>
        <end position="172"/>
    </location>
    <ligand>
        <name>NAD(+)</name>
        <dbReference type="ChEBI" id="CHEBI:57540"/>
    </ligand>
</feature>
<feature type="binding site" evidence="1">
    <location>
        <position position="184"/>
    </location>
    <ligand>
        <name>Zn(2+)</name>
        <dbReference type="ChEBI" id="CHEBI:29105"/>
    </ligand>
</feature>
<feature type="binding site" evidence="1">
    <location>
        <position position="247"/>
    </location>
    <ligand>
        <name>Zn(2+)</name>
        <dbReference type="ChEBI" id="CHEBI:29105"/>
    </ligand>
</feature>
<feature type="binding site" evidence="1">
    <location>
        <position position="264"/>
    </location>
    <ligand>
        <name>Zn(2+)</name>
        <dbReference type="ChEBI" id="CHEBI:29105"/>
    </ligand>
</feature>
<evidence type="ECO:0000255" key="1">
    <source>
        <dbReference type="HAMAP-Rule" id="MF_00110"/>
    </source>
</evidence>
<gene>
    <name evidence="1" type="primary">aroB</name>
    <name type="ordered locus">SSPA3127</name>
</gene>
<keyword id="KW-0028">Amino-acid biosynthesis</keyword>
<keyword id="KW-0057">Aromatic amino acid biosynthesis</keyword>
<keyword id="KW-0170">Cobalt</keyword>
<keyword id="KW-0963">Cytoplasm</keyword>
<keyword id="KW-0456">Lyase</keyword>
<keyword id="KW-0479">Metal-binding</keyword>
<keyword id="KW-0520">NAD</keyword>
<keyword id="KW-0547">Nucleotide-binding</keyword>
<keyword id="KW-0862">Zinc</keyword>
<proteinExistence type="inferred from homology"/>
<name>AROB_SALPK</name>
<accession>B5BH29</accession>
<protein>
    <recommendedName>
        <fullName evidence="1">3-dehydroquinate synthase</fullName>
        <shortName evidence="1">DHQS</shortName>
        <ecNumber evidence="1">4.2.3.4</ecNumber>
    </recommendedName>
</protein>
<sequence length="362" mass="38680">MERITVTLGERSYPITIAAGLFNEPASFLPLKSGDQVMLVTNETLAPLYLDKVRGVLERAGVNVDSVILPDGEQYKSLTVLDTVFTALLKKPHGRDTTLVALGGGVIGDLTGFAAASYQRGVRFIQVPTTLLSQVDSSVGGKTAVNHPLGKNMIGAFYQPASVVVDLDCLKTLPARELASGLAEVIKYGIILDADFFTWLEGNLDALLRLDGPAMAYCIRRCCELKAEVVAADEREAGLRALLNLGHTFGHAIEAEMGYGNWLHGEAVAAGIVMAARASERLGQFSSADTQRIIALLERAGLPVNGPCEMSAQDYLPHMLRDKKVLAGELRLVLPLAIGKSEVRGGVSHEVVLSAIADCQQA</sequence>